<proteinExistence type="inferred from homology"/>
<organism>
    <name type="scientific">Streptococcus pneumoniae (strain JJA)</name>
    <dbReference type="NCBI Taxonomy" id="488222"/>
    <lineage>
        <taxon>Bacteria</taxon>
        <taxon>Bacillati</taxon>
        <taxon>Bacillota</taxon>
        <taxon>Bacilli</taxon>
        <taxon>Lactobacillales</taxon>
        <taxon>Streptococcaceae</taxon>
        <taxon>Streptococcus</taxon>
    </lineage>
</organism>
<dbReference type="EC" id="1.7.1.7" evidence="1"/>
<dbReference type="EMBL" id="CP000919">
    <property type="protein sequence ID" value="ACO19230.1"/>
    <property type="molecule type" value="Genomic_DNA"/>
</dbReference>
<dbReference type="RefSeq" id="WP_000931180.1">
    <property type="nucleotide sequence ID" value="NC_012466.1"/>
</dbReference>
<dbReference type="SMR" id="C1CEK5"/>
<dbReference type="KEGG" id="sjj:SPJ_1163"/>
<dbReference type="HOGENOM" id="CLU_022552_5_0_9"/>
<dbReference type="Proteomes" id="UP000002206">
    <property type="component" value="Chromosome"/>
</dbReference>
<dbReference type="GO" id="GO:0005829">
    <property type="term" value="C:cytosol"/>
    <property type="evidence" value="ECO:0007669"/>
    <property type="project" value="TreeGrafter"/>
</dbReference>
<dbReference type="GO" id="GO:1902560">
    <property type="term" value="C:GMP reductase complex"/>
    <property type="evidence" value="ECO:0007669"/>
    <property type="project" value="InterPro"/>
</dbReference>
<dbReference type="GO" id="GO:0003920">
    <property type="term" value="F:GMP reductase activity"/>
    <property type="evidence" value="ECO:0007669"/>
    <property type="project" value="UniProtKB-UniRule"/>
</dbReference>
<dbReference type="GO" id="GO:0006163">
    <property type="term" value="P:purine nucleotide metabolic process"/>
    <property type="evidence" value="ECO:0007669"/>
    <property type="project" value="UniProtKB-UniRule"/>
</dbReference>
<dbReference type="CDD" id="cd00381">
    <property type="entry name" value="IMPDH"/>
    <property type="match status" value="1"/>
</dbReference>
<dbReference type="FunFam" id="3.20.20.70:FF:000079">
    <property type="entry name" value="GMP reductase"/>
    <property type="match status" value="1"/>
</dbReference>
<dbReference type="Gene3D" id="3.20.20.70">
    <property type="entry name" value="Aldolase class I"/>
    <property type="match status" value="1"/>
</dbReference>
<dbReference type="HAMAP" id="MF_01511">
    <property type="entry name" value="GMP_reduct_type2"/>
    <property type="match status" value="1"/>
</dbReference>
<dbReference type="InterPro" id="IPR013785">
    <property type="entry name" value="Aldolase_TIM"/>
</dbReference>
<dbReference type="InterPro" id="IPR050139">
    <property type="entry name" value="GMP_reductase"/>
</dbReference>
<dbReference type="InterPro" id="IPR005994">
    <property type="entry name" value="GuaC_type_2"/>
</dbReference>
<dbReference type="InterPro" id="IPR015875">
    <property type="entry name" value="IMP_DH/GMP_Rdtase_CS"/>
</dbReference>
<dbReference type="InterPro" id="IPR001093">
    <property type="entry name" value="IMP_DH_GMPRt"/>
</dbReference>
<dbReference type="NCBIfam" id="TIGR01306">
    <property type="entry name" value="GMP_reduct_2"/>
    <property type="match status" value="1"/>
</dbReference>
<dbReference type="NCBIfam" id="NF003966">
    <property type="entry name" value="PRK05458.1"/>
    <property type="match status" value="1"/>
</dbReference>
<dbReference type="PANTHER" id="PTHR43170">
    <property type="entry name" value="GMP REDUCTASE"/>
    <property type="match status" value="1"/>
</dbReference>
<dbReference type="PANTHER" id="PTHR43170:SF5">
    <property type="entry name" value="GMP REDUCTASE"/>
    <property type="match status" value="1"/>
</dbReference>
<dbReference type="Pfam" id="PF00478">
    <property type="entry name" value="IMPDH"/>
    <property type="match status" value="1"/>
</dbReference>
<dbReference type="PIRSF" id="PIRSF036500">
    <property type="entry name" value="GMP_red_Firmic"/>
    <property type="match status" value="1"/>
</dbReference>
<dbReference type="SMART" id="SM01240">
    <property type="entry name" value="IMPDH"/>
    <property type="match status" value="1"/>
</dbReference>
<dbReference type="SUPFAM" id="SSF51412">
    <property type="entry name" value="Inosine monophosphate dehydrogenase (IMPDH)"/>
    <property type="match status" value="1"/>
</dbReference>
<dbReference type="PROSITE" id="PS00487">
    <property type="entry name" value="IMP_DH_GMP_RED"/>
    <property type="match status" value="1"/>
</dbReference>
<feature type="chain" id="PRO_1000185059" description="GMP reductase">
    <location>
        <begin position="1"/>
        <end position="328"/>
    </location>
</feature>
<feature type="active site" description="Thioimidate intermediate" evidence="1">
    <location>
        <position position="176"/>
    </location>
</feature>
<feature type="binding site" evidence="1">
    <location>
        <begin position="205"/>
        <end position="228"/>
    </location>
    <ligand>
        <name>NADP(+)</name>
        <dbReference type="ChEBI" id="CHEBI:58349"/>
    </ligand>
</feature>
<keyword id="KW-0521">NADP</keyword>
<keyword id="KW-0560">Oxidoreductase</keyword>
<name>GUAC_STRZJ</name>
<comment type="function">
    <text evidence="1">Catalyzes the irreversible NADPH-dependent deamination of GMP to IMP. It functions in the conversion of nucleobase, nucleoside and nucleotide derivatives of G to A nucleotides, and in maintaining the intracellular balance of A and G nucleotides.</text>
</comment>
<comment type="catalytic activity">
    <reaction evidence="1">
        <text>IMP + NH4(+) + NADP(+) = GMP + NADPH + 2 H(+)</text>
        <dbReference type="Rhea" id="RHEA:17185"/>
        <dbReference type="ChEBI" id="CHEBI:15378"/>
        <dbReference type="ChEBI" id="CHEBI:28938"/>
        <dbReference type="ChEBI" id="CHEBI:57783"/>
        <dbReference type="ChEBI" id="CHEBI:58053"/>
        <dbReference type="ChEBI" id="CHEBI:58115"/>
        <dbReference type="ChEBI" id="CHEBI:58349"/>
        <dbReference type="EC" id="1.7.1.7"/>
    </reaction>
</comment>
<comment type="similarity">
    <text evidence="1">Belongs to the IMPDH/GMPR family. GuaC type 2 subfamily.</text>
</comment>
<protein>
    <recommendedName>
        <fullName evidence="1">GMP reductase</fullName>
        <ecNumber evidence="1">1.7.1.7</ecNumber>
    </recommendedName>
    <alternativeName>
        <fullName evidence="1">Guanosine 5'-monophosphate oxidoreductase</fullName>
        <shortName evidence="1">Guanosine monophosphate reductase</shortName>
    </alternativeName>
</protein>
<sequence>MLNEFPIFDYEDIQLIPNKCVIKSRAEADTSVTLGNHTFKLPVVPANMQTILDENVAEQLAKGGYFYIMHRFDEAGRIPFIKRMHNQGLIASISVGVKDYEYDFVRQLKTDAPEYITIDIAHGHADSVISMIQHIKKELPDTFVIAGNVGTPEAVRELENAGADATKVGIGPGKVCITKVKTGFGTGGWQLAALRWCVKAARKPIIADGGIRTHGDIAKSIRFGASMIMIGSLFAGHIESPGKTIEVDGEQFKEYYGSASQYQKGAYKNVEGKRILLPAKGHLQDTLTEMEQDLQSAISYAGGRQVADLKHVDYVIVKNSIWNGDASH</sequence>
<reference key="1">
    <citation type="journal article" date="2010" name="Genome Biol.">
        <title>Structure and dynamics of the pan-genome of Streptococcus pneumoniae and closely related species.</title>
        <authorList>
            <person name="Donati C."/>
            <person name="Hiller N.L."/>
            <person name="Tettelin H."/>
            <person name="Muzzi A."/>
            <person name="Croucher N.J."/>
            <person name="Angiuoli S.V."/>
            <person name="Oggioni M."/>
            <person name="Dunning Hotopp J.C."/>
            <person name="Hu F.Z."/>
            <person name="Riley D.R."/>
            <person name="Covacci A."/>
            <person name="Mitchell T.J."/>
            <person name="Bentley S.D."/>
            <person name="Kilian M."/>
            <person name="Ehrlich G.D."/>
            <person name="Rappuoli R."/>
            <person name="Moxon E.R."/>
            <person name="Masignani V."/>
        </authorList>
    </citation>
    <scope>NUCLEOTIDE SEQUENCE [LARGE SCALE GENOMIC DNA]</scope>
    <source>
        <strain>JJA</strain>
    </source>
</reference>
<evidence type="ECO:0000255" key="1">
    <source>
        <dbReference type="HAMAP-Rule" id="MF_01511"/>
    </source>
</evidence>
<accession>C1CEK5</accession>
<gene>
    <name evidence="1" type="primary">guaC</name>
    <name type="ordered locus">SPJ_1163</name>
</gene>